<keyword id="KW-0028">Amino-acid biosynthesis</keyword>
<keyword id="KW-0963">Cytoplasm</keyword>
<keyword id="KW-0368">Histidine biosynthesis</keyword>
<keyword id="KW-0456">Lyase</keyword>
<protein>
    <recommendedName>
        <fullName evidence="1">Imidazole glycerol phosphate synthase subunit HisF</fullName>
        <ecNumber evidence="1">4.3.2.10</ecNumber>
    </recommendedName>
    <alternativeName>
        <fullName evidence="1">IGP synthase cyclase subunit</fullName>
    </alternativeName>
    <alternativeName>
        <fullName evidence="1">IGP synthase subunit HisF</fullName>
    </alternativeName>
    <alternativeName>
        <fullName evidence="1">ImGP synthase subunit HisF</fullName>
        <shortName evidence="1">IGPS subunit HisF</shortName>
    </alternativeName>
</protein>
<evidence type="ECO:0000255" key="1">
    <source>
        <dbReference type="HAMAP-Rule" id="MF_01013"/>
    </source>
</evidence>
<comment type="function">
    <text evidence="1">IGPS catalyzes the conversion of PRFAR and glutamine to IGP, AICAR and glutamate. The HisF subunit catalyzes the cyclization activity that produces IGP and AICAR from PRFAR using the ammonia provided by the HisH subunit.</text>
</comment>
<comment type="catalytic activity">
    <reaction evidence="1">
        <text>5-[(5-phospho-1-deoxy-D-ribulos-1-ylimino)methylamino]-1-(5-phospho-beta-D-ribosyl)imidazole-4-carboxamide + L-glutamine = D-erythro-1-(imidazol-4-yl)glycerol 3-phosphate + 5-amino-1-(5-phospho-beta-D-ribosyl)imidazole-4-carboxamide + L-glutamate + H(+)</text>
        <dbReference type="Rhea" id="RHEA:24793"/>
        <dbReference type="ChEBI" id="CHEBI:15378"/>
        <dbReference type="ChEBI" id="CHEBI:29985"/>
        <dbReference type="ChEBI" id="CHEBI:58278"/>
        <dbReference type="ChEBI" id="CHEBI:58359"/>
        <dbReference type="ChEBI" id="CHEBI:58475"/>
        <dbReference type="ChEBI" id="CHEBI:58525"/>
        <dbReference type="EC" id="4.3.2.10"/>
    </reaction>
</comment>
<comment type="pathway">
    <text evidence="1">Amino-acid biosynthesis; L-histidine biosynthesis; L-histidine from 5-phospho-alpha-D-ribose 1-diphosphate: step 5/9.</text>
</comment>
<comment type="subunit">
    <text evidence="1">Heterodimer of HisH and HisF.</text>
</comment>
<comment type="subcellular location">
    <subcellularLocation>
        <location evidence="1">Cytoplasm</location>
    </subcellularLocation>
</comment>
<comment type="similarity">
    <text evidence="1">Belongs to the HisA/HisF family.</text>
</comment>
<accession>B3QQ00</accession>
<organism>
    <name type="scientific">Chlorobaculum parvum (strain DSM 263 / NCIMB 8327)</name>
    <name type="common">Chlorobium vibrioforme subsp. thiosulfatophilum</name>
    <dbReference type="NCBI Taxonomy" id="517417"/>
    <lineage>
        <taxon>Bacteria</taxon>
        <taxon>Pseudomonadati</taxon>
        <taxon>Chlorobiota</taxon>
        <taxon>Chlorobiia</taxon>
        <taxon>Chlorobiales</taxon>
        <taxon>Chlorobiaceae</taxon>
        <taxon>Chlorobaculum</taxon>
    </lineage>
</organism>
<name>HIS6_CHLP8</name>
<proteinExistence type="inferred from homology"/>
<reference key="1">
    <citation type="submission" date="2008-06" db="EMBL/GenBank/DDBJ databases">
        <title>Complete sequence of Chlorobaculum parvum NCIB 8327.</title>
        <authorList>
            <consortium name="US DOE Joint Genome Institute"/>
            <person name="Lucas S."/>
            <person name="Copeland A."/>
            <person name="Lapidus A."/>
            <person name="Glavina del Rio T."/>
            <person name="Dalin E."/>
            <person name="Tice H."/>
            <person name="Bruce D."/>
            <person name="Goodwin L."/>
            <person name="Pitluck S."/>
            <person name="Schmutz J."/>
            <person name="Larimer F."/>
            <person name="Land M."/>
            <person name="Hauser L."/>
            <person name="Kyrpides N."/>
            <person name="Mikhailova N."/>
            <person name="Zhao F."/>
            <person name="Li T."/>
            <person name="Liu Z."/>
            <person name="Overmann J."/>
            <person name="Bryant D.A."/>
            <person name="Richardson P."/>
        </authorList>
    </citation>
    <scope>NUCLEOTIDE SEQUENCE [LARGE SCALE GENOMIC DNA]</scope>
    <source>
        <strain>DSM 263 / NCIMB 8327</strain>
    </source>
</reference>
<dbReference type="EC" id="4.3.2.10" evidence="1"/>
<dbReference type="EMBL" id="CP001099">
    <property type="protein sequence ID" value="ACF12003.1"/>
    <property type="molecule type" value="Genomic_DNA"/>
</dbReference>
<dbReference type="RefSeq" id="WP_012502836.1">
    <property type="nucleotide sequence ID" value="NC_011027.1"/>
</dbReference>
<dbReference type="SMR" id="B3QQ00"/>
<dbReference type="STRING" id="517417.Cpar_1605"/>
<dbReference type="KEGG" id="cpc:Cpar_1605"/>
<dbReference type="eggNOG" id="COG0107">
    <property type="taxonomic scope" value="Bacteria"/>
</dbReference>
<dbReference type="HOGENOM" id="CLU_048577_4_0_10"/>
<dbReference type="OrthoDB" id="9781903at2"/>
<dbReference type="UniPathway" id="UPA00031">
    <property type="reaction ID" value="UER00010"/>
</dbReference>
<dbReference type="Proteomes" id="UP000008811">
    <property type="component" value="Chromosome"/>
</dbReference>
<dbReference type="GO" id="GO:0005737">
    <property type="term" value="C:cytoplasm"/>
    <property type="evidence" value="ECO:0007669"/>
    <property type="project" value="UniProtKB-SubCell"/>
</dbReference>
<dbReference type="GO" id="GO:0000107">
    <property type="term" value="F:imidazoleglycerol-phosphate synthase activity"/>
    <property type="evidence" value="ECO:0007669"/>
    <property type="project" value="UniProtKB-UniRule"/>
</dbReference>
<dbReference type="GO" id="GO:0016829">
    <property type="term" value="F:lyase activity"/>
    <property type="evidence" value="ECO:0007669"/>
    <property type="project" value="UniProtKB-KW"/>
</dbReference>
<dbReference type="GO" id="GO:0000105">
    <property type="term" value="P:L-histidine biosynthetic process"/>
    <property type="evidence" value="ECO:0007669"/>
    <property type="project" value="UniProtKB-UniRule"/>
</dbReference>
<dbReference type="CDD" id="cd04731">
    <property type="entry name" value="HisF"/>
    <property type="match status" value="1"/>
</dbReference>
<dbReference type="FunFam" id="3.20.20.70:FF:000006">
    <property type="entry name" value="Imidazole glycerol phosphate synthase subunit HisF"/>
    <property type="match status" value="1"/>
</dbReference>
<dbReference type="Gene3D" id="3.20.20.70">
    <property type="entry name" value="Aldolase class I"/>
    <property type="match status" value="1"/>
</dbReference>
<dbReference type="HAMAP" id="MF_01013">
    <property type="entry name" value="HisF"/>
    <property type="match status" value="1"/>
</dbReference>
<dbReference type="InterPro" id="IPR013785">
    <property type="entry name" value="Aldolase_TIM"/>
</dbReference>
<dbReference type="InterPro" id="IPR006062">
    <property type="entry name" value="His_biosynth"/>
</dbReference>
<dbReference type="InterPro" id="IPR004651">
    <property type="entry name" value="HisF"/>
</dbReference>
<dbReference type="InterPro" id="IPR050064">
    <property type="entry name" value="IGPS_HisA/HisF"/>
</dbReference>
<dbReference type="InterPro" id="IPR011060">
    <property type="entry name" value="RibuloseP-bd_barrel"/>
</dbReference>
<dbReference type="NCBIfam" id="TIGR00735">
    <property type="entry name" value="hisF"/>
    <property type="match status" value="1"/>
</dbReference>
<dbReference type="PANTHER" id="PTHR21235:SF2">
    <property type="entry name" value="IMIDAZOLE GLYCEROL PHOSPHATE SYNTHASE HISHF"/>
    <property type="match status" value="1"/>
</dbReference>
<dbReference type="PANTHER" id="PTHR21235">
    <property type="entry name" value="IMIDAZOLE GLYCEROL PHOSPHATE SYNTHASE SUBUNIT HISF/H IGP SYNTHASE SUBUNIT HISF/H"/>
    <property type="match status" value="1"/>
</dbReference>
<dbReference type="Pfam" id="PF00977">
    <property type="entry name" value="His_biosynth"/>
    <property type="match status" value="1"/>
</dbReference>
<dbReference type="SUPFAM" id="SSF51366">
    <property type="entry name" value="Ribulose-phoshate binding barrel"/>
    <property type="match status" value="1"/>
</dbReference>
<gene>
    <name evidence="1" type="primary">hisF</name>
    <name type="ordered locus">Cpar_1605</name>
</gene>
<feature type="chain" id="PRO_1000134979" description="Imidazole glycerol phosphate synthase subunit HisF">
    <location>
        <begin position="1"/>
        <end position="251"/>
    </location>
</feature>
<feature type="active site" evidence="1">
    <location>
        <position position="11"/>
    </location>
</feature>
<feature type="active site" evidence="1">
    <location>
        <position position="130"/>
    </location>
</feature>
<sequence length="251" mass="27493">MLAKRIIPCLDVRDGRVVKGINFEGLRDAGSILEQARFYNNEMADELVFLDISASIESRRTTLEEVLKVSGEVFIPLTVGGGISSVERARDAFLHGADKVSVNTAAVNDPVLISRIAERFGSQAVVVAIDVKKVNGEYIVHTHSGKTPTQYEALEWAHRVQELGAGEILLTSMDRDGTQEGYDNEILKRISTSVHIPVIASGGAGNLEHLYEGFTKGHADAALAASIFHFRTYSIREAKEYLRDKGIAVRL</sequence>